<reference key="1">
    <citation type="journal article" date="1993" name="Mol. Cell. Biol.">
        <title>Kid-1, a putative renal transcription factor: regulation during ontogeny and in response to ischemia and toxic injury.</title>
        <authorList>
            <person name="Witzgall R."/>
            <person name="O'Leary E."/>
            <person name="Gessner R."/>
            <person name="Ouellette A.J."/>
            <person name="Bonventre J.V."/>
        </authorList>
    </citation>
    <scope>NUCLEOTIDE SEQUENCE [MRNA]</scope>
    <scope>FUNCTION</scope>
    <scope>TISSUE SPECIFICITY</scope>
    <scope>DEVELOPMENTAL STAGE</scope>
    <scope>SUBCELLULAR LOCATION</scope>
    <source>
        <tissue>Kidney</tissue>
    </source>
</reference>
<reference key="2">
    <citation type="journal article" date="1994" name="Genomics">
        <title>Genomic structure and chromosomal location of the rat gene encoding the zinc finger transcription factor Kid-1.</title>
        <authorList>
            <person name="Witzgall R."/>
            <person name="Volk R."/>
            <person name="Yeung R.S."/>
            <person name="Bonventre J.V."/>
        </authorList>
    </citation>
    <scope>NUCLEOTIDE SEQUENCE [GENOMIC DNA] OF 1-110</scope>
    <source>
        <tissue>Liver</tissue>
    </source>
</reference>
<organism>
    <name type="scientific">Rattus norvegicus</name>
    <name type="common">Rat</name>
    <dbReference type="NCBI Taxonomy" id="10116"/>
    <lineage>
        <taxon>Eukaryota</taxon>
        <taxon>Metazoa</taxon>
        <taxon>Chordata</taxon>
        <taxon>Craniata</taxon>
        <taxon>Vertebrata</taxon>
        <taxon>Euteleostomi</taxon>
        <taxon>Mammalia</taxon>
        <taxon>Eutheria</taxon>
        <taxon>Euarchontoglires</taxon>
        <taxon>Glires</taxon>
        <taxon>Rodentia</taxon>
        <taxon>Myomorpha</taxon>
        <taxon>Muroidea</taxon>
        <taxon>Muridae</taxon>
        <taxon>Murinae</taxon>
        <taxon>Rattus</taxon>
    </lineage>
</organism>
<name>Z354A_RAT</name>
<dbReference type="EMBL" id="M96548">
    <property type="protein sequence ID" value="AAB07673.1"/>
    <property type="molecule type" value="mRNA"/>
</dbReference>
<dbReference type="EMBL" id="S73488">
    <property type="protein sequence ID" value="AAB31189.1"/>
    <property type="molecule type" value="Genomic_DNA"/>
</dbReference>
<dbReference type="EMBL" id="S73484">
    <property type="protein sequence ID" value="AAB31189.1"/>
    <property type="status" value="JOINED"/>
    <property type="molecule type" value="Genomic_DNA"/>
</dbReference>
<dbReference type="EMBL" id="S73485">
    <property type="protein sequence ID" value="AAB31189.1"/>
    <property type="status" value="JOINED"/>
    <property type="molecule type" value="Genomic_DNA"/>
</dbReference>
<dbReference type="EMBL" id="S73486">
    <property type="protein sequence ID" value="AAB31189.1"/>
    <property type="status" value="JOINED"/>
    <property type="molecule type" value="Genomic_DNA"/>
</dbReference>
<dbReference type="PIR" id="A48157">
    <property type="entry name" value="A48157"/>
</dbReference>
<dbReference type="RefSeq" id="NP_434685.1">
    <property type="nucleotide sequence ID" value="NM_052798.2"/>
</dbReference>
<dbReference type="RefSeq" id="XP_006246289.1">
    <property type="nucleotide sequence ID" value="XM_006246227.3"/>
</dbReference>
<dbReference type="SMR" id="Q02975"/>
<dbReference type="FunCoup" id="Q02975">
    <property type="interactions" value="35"/>
</dbReference>
<dbReference type="IntAct" id="Q02975">
    <property type="interactions" value="1"/>
</dbReference>
<dbReference type="STRING" id="10116.ENSRNOP00000049437"/>
<dbReference type="iPTMnet" id="Q02975"/>
<dbReference type="PhosphoSitePlus" id="Q02975"/>
<dbReference type="PaxDb" id="10116-ENSRNOP00000049437"/>
<dbReference type="GeneID" id="24522"/>
<dbReference type="KEGG" id="rno:24522"/>
<dbReference type="UCSC" id="RGD:2967">
    <property type="organism name" value="rat"/>
</dbReference>
<dbReference type="AGR" id="RGD:2967"/>
<dbReference type="CTD" id="21408"/>
<dbReference type="RGD" id="2967">
    <property type="gene designation" value="Zfp354a"/>
</dbReference>
<dbReference type="VEuPathDB" id="HostDB:ENSRNOG00000003634"/>
<dbReference type="eggNOG" id="KOG1721">
    <property type="taxonomic scope" value="Eukaryota"/>
</dbReference>
<dbReference type="HOGENOM" id="CLU_002678_44_5_1"/>
<dbReference type="InParanoid" id="Q02975"/>
<dbReference type="OrthoDB" id="8117402at2759"/>
<dbReference type="PhylomeDB" id="Q02975"/>
<dbReference type="TreeFam" id="TF341817"/>
<dbReference type="Reactome" id="R-RNO-212436">
    <property type="pathway name" value="Generic Transcription Pathway"/>
</dbReference>
<dbReference type="Reactome" id="R-RNO-9843940">
    <property type="pathway name" value="Regulation of endogenous retroelements by KRAB-ZFP proteins"/>
</dbReference>
<dbReference type="PRO" id="PR:Q02975"/>
<dbReference type="Proteomes" id="UP000002494">
    <property type="component" value="Chromosome 10"/>
</dbReference>
<dbReference type="Bgee" id="ENSRNOG00000003634">
    <property type="expression patterns" value="Expressed in adult mammalian kidney and 19 other cell types or tissues"/>
</dbReference>
<dbReference type="ExpressionAtlas" id="Q02975">
    <property type="expression patterns" value="baseline and differential"/>
</dbReference>
<dbReference type="GO" id="GO:0005634">
    <property type="term" value="C:nucleus"/>
    <property type="evidence" value="ECO:0000266"/>
    <property type="project" value="RGD"/>
</dbReference>
<dbReference type="GO" id="GO:0003700">
    <property type="term" value="F:DNA-binding transcription factor activity"/>
    <property type="evidence" value="ECO:0000315"/>
    <property type="project" value="RGD"/>
</dbReference>
<dbReference type="GO" id="GO:0000981">
    <property type="term" value="F:DNA-binding transcription factor activity, RNA polymerase II-specific"/>
    <property type="evidence" value="ECO:0000318"/>
    <property type="project" value="GO_Central"/>
</dbReference>
<dbReference type="GO" id="GO:0000978">
    <property type="term" value="F:RNA polymerase II cis-regulatory region sequence-specific DNA binding"/>
    <property type="evidence" value="ECO:0000318"/>
    <property type="project" value="GO_Central"/>
</dbReference>
<dbReference type="GO" id="GO:0008270">
    <property type="term" value="F:zinc ion binding"/>
    <property type="evidence" value="ECO:0007669"/>
    <property type="project" value="UniProtKB-KW"/>
</dbReference>
<dbReference type="GO" id="GO:0001822">
    <property type="term" value="P:kidney development"/>
    <property type="evidence" value="ECO:0000270"/>
    <property type="project" value="RGD"/>
</dbReference>
<dbReference type="GO" id="GO:0000122">
    <property type="term" value="P:negative regulation of transcription by RNA polymerase II"/>
    <property type="evidence" value="ECO:0000315"/>
    <property type="project" value="RGD"/>
</dbReference>
<dbReference type="GO" id="GO:0007000">
    <property type="term" value="P:nucleolus organization"/>
    <property type="evidence" value="ECO:0000315"/>
    <property type="project" value="RGD"/>
</dbReference>
<dbReference type="GO" id="GO:0006357">
    <property type="term" value="P:regulation of transcription by RNA polymerase II"/>
    <property type="evidence" value="ECO:0000318"/>
    <property type="project" value="GO_Central"/>
</dbReference>
<dbReference type="GO" id="GO:0051593">
    <property type="term" value="P:response to folic acid"/>
    <property type="evidence" value="ECO:0000270"/>
    <property type="project" value="RGD"/>
</dbReference>
<dbReference type="GO" id="GO:0001666">
    <property type="term" value="P:response to hypoxia"/>
    <property type="evidence" value="ECO:0000270"/>
    <property type="project" value="RGD"/>
</dbReference>
<dbReference type="CDD" id="cd07765">
    <property type="entry name" value="KRAB_A-box"/>
    <property type="match status" value="1"/>
</dbReference>
<dbReference type="FunFam" id="3.30.160.60:FF:000325">
    <property type="entry name" value="ZFP90 zinc finger protein"/>
    <property type="match status" value="1"/>
</dbReference>
<dbReference type="FunFam" id="3.30.160.60:FF:000295">
    <property type="entry name" value="zinc finger protein 19"/>
    <property type="match status" value="1"/>
</dbReference>
<dbReference type="FunFam" id="3.30.160.60:FF:002343">
    <property type="entry name" value="Zinc finger protein 33A"/>
    <property type="match status" value="2"/>
</dbReference>
<dbReference type="FunFam" id="3.30.160.60:FF:000387">
    <property type="entry name" value="Zinc finger protein 354A"/>
    <property type="match status" value="2"/>
</dbReference>
<dbReference type="FunFam" id="3.30.160.60:FF:001586">
    <property type="entry name" value="Zinc finger protein 354B"/>
    <property type="match status" value="1"/>
</dbReference>
<dbReference type="FunFam" id="3.30.160.60:FF:001004">
    <property type="entry name" value="Zinc finger protein 426"/>
    <property type="match status" value="1"/>
</dbReference>
<dbReference type="FunFam" id="3.30.160.60:FF:000281">
    <property type="entry name" value="Zinc finger protein 558 isoform X1"/>
    <property type="match status" value="1"/>
</dbReference>
<dbReference type="FunFam" id="3.30.160.60:FF:000011">
    <property type="entry name" value="zinc finger protein 615 isoform X1"/>
    <property type="match status" value="2"/>
</dbReference>
<dbReference type="FunFam" id="3.30.160.60:FF:000416">
    <property type="entry name" value="zinc finger protein 879 isoform X1"/>
    <property type="match status" value="1"/>
</dbReference>
<dbReference type="FunFam" id="3.30.160.60:FF:000485">
    <property type="entry name" value="Zinc finger protein 90 homolog"/>
    <property type="match status" value="1"/>
</dbReference>
<dbReference type="Gene3D" id="6.10.140.140">
    <property type="match status" value="1"/>
</dbReference>
<dbReference type="Gene3D" id="3.30.160.60">
    <property type="entry name" value="Classic Zinc Finger"/>
    <property type="match status" value="13"/>
</dbReference>
<dbReference type="InterPro" id="IPR001909">
    <property type="entry name" value="KRAB"/>
</dbReference>
<dbReference type="InterPro" id="IPR036051">
    <property type="entry name" value="KRAB_dom_sf"/>
</dbReference>
<dbReference type="InterPro" id="IPR036236">
    <property type="entry name" value="Znf_C2H2_sf"/>
</dbReference>
<dbReference type="InterPro" id="IPR013087">
    <property type="entry name" value="Znf_C2H2_type"/>
</dbReference>
<dbReference type="PANTHER" id="PTHR24399:SF75">
    <property type="entry name" value="ZFP14 ZINC FINGER PROTEIN-RELATED"/>
    <property type="match status" value="1"/>
</dbReference>
<dbReference type="PANTHER" id="PTHR24399">
    <property type="entry name" value="ZINC FINGER AND BTB DOMAIN-CONTAINING"/>
    <property type="match status" value="1"/>
</dbReference>
<dbReference type="Pfam" id="PF01352">
    <property type="entry name" value="KRAB"/>
    <property type="match status" value="1"/>
</dbReference>
<dbReference type="Pfam" id="PF00096">
    <property type="entry name" value="zf-C2H2"/>
    <property type="match status" value="13"/>
</dbReference>
<dbReference type="SMART" id="SM00349">
    <property type="entry name" value="KRAB"/>
    <property type="match status" value="1"/>
</dbReference>
<dbReference type="SMART" id="SM00355">
    <property type="entry name" value="ZnF_C2H2"/>
    <property type="match status" value="13"/>
</dbReference>
<dbReference type="SUPFAM" id="SSF57667">
    <property type="entry name" value="beta-beta-alpha zinc fingers"/>
    <property type="match status" value="8"/>
</dbReference>
<dbReference type="SUPFAM" id="SSF109640">
    <property type="entry name" value="KRAB domain (Kruppel-associated box)"/>
    <property type="match status" value="1"/>
</dbReference>
<dbReference type="PROSITE" id="PS50805">
    <property type="entry name" value="KRAB"/>
    <property type="match status" value="1"/>
</dbReference>
<dbReference type="PROSITE" id="PS00028">
    <property type="entry name" value="ZINC_FINGER_C2H2_1"/>
    <property type="match status" value="13"/>
</dbReference>
<dbReference type="PROSITE" id="PS50157">
    <property type="entry name" value="ZINC_FINGER_C2H2_2"/>
    <property type="match status" value="13"/>
</dbReference>
<sequence>MAPEQREGASQVSVTFEDVAVLFTRDEWKKLDLSQRSLYREVMLENYSNLASMAGFLFTKPKVISLLQQGEDPWQVEKEGPRYFSLGLKCSHRTTKSTQTQDSSFQELIVRKSKRTFAFEPLNMKSENLFIHEGKLEEKWDKNTLTVERSHKNNEFSPKSHREKRSSECKKQISYLSNPPGITPDKRYKCSMCEKTFINTSSLRKHEKNHSGEKLFKCKECSKAFSQSSALIQHQITHTGEKPYVCKECGKAFTLSTSLYKHLRTHTVEKSYRCKECGKSFGQRSGLFIHQKIHARENPHRYNPGRKASASLSGCQRAHSRKKTYLCNECGNTFKSSSSLRYHQRIHTGEKPFRCSECGRAFSQSASLIQHERIHTGEKPYRCGECGKGFTSISRLNRHRIIHTGEKLYNCNECGKALSSHSTLIIHERIHTGEKPCKCKVCGKAFRQSSALIQHQRMHTGERPYKCNECGKTFRCNSSLSNHQRIHTGEKPYQCIECGMSFGQSSALIQHRRIHTGEKPFKCNTCGKTFRQSSSRIAHQRIHTGEKPYECNTCGKLFNYRSSLTNHYKIHVDEDP</sequence>
<accession>Q02975</accession>
<comment type="function">
    <text evidence="4">It may play a role in renal development and may also be involved in the repair of the kidney after ischemia-reperfusion or folic acid administration.</text>
</comment>
<comment type="subcellular location">
    <subcellularLocation>
        <location evidence="6">Nucleus</location>
    </subcellularLocation>
</comment>
<comment type="tissue specificity">
    <text evidence="4">Predominantly in the kidney.</text>
</comment>
<comment type="developmental stage">
    <text evidence="4">Protein levels accumulate with age in postnatal renal development.</text>
</comment>
<comment type="similarity">
    <text evidence="5">Belongs to the krueppel C2H2-type zinc-finger protein family.</text>
</comment>
<keyword id="KW-0010">Activator</keyword>
<keyword id="KW-0217">Developmental protein</keyword>
<keyword id="KW-0238">DNA-binding</keyword>
<keyword id="KW-1017">Isopeptide bond</keyword>
<keyword id="KW-0479">Metal-binding</keyword>
<keyword id="KW-0539">Nucleus</keyword>
<keyword id="KW-1185">Reference proteome</keyword>
<keyword id="KW-0677">Repeat</keyword>
<keyword id="KW-0804">Transcription</keyword>
<keyword id="KW-0805">Transcription regulation</keyword>
<keyword id="KW-0832">Ubl conjugation</keyword>
<keyword id="KW-0862">Zinc</keyword>
<keyword id="KW-0863">Zinc-finger</keyword>
<proteinExistence type="evidence at transcript level"/>
<feature type="chain" id="PRO_0000047240" description="Zinc finger protein 354A">
    <location>
        <begin position="1"/>
        <end position="576"/>
    </location>
</feature>
<feature type="domain" description="KRAB" evidence="3">
    <location>
        <begin position="14"/>
        <end position="86"/>
    </location>
</feature>
<feature type="zinc finger region" description="C2H2-type 1" evidence="2">
    <location>
        <begin position="188"/>
        <end position="210"/>
    </location>
</feature>
<feature type="zinc finger region" description="C2H2-type 2" evidence="2">
    <location>
        <begin position="216"/>
        <end position="238"/>
    </location>
</feature>
<feature type="zinc finger region" description="C2H2-type 3" evidence="2">
    <location>
        <begin position="244"/>
        <end position="266"/>
    </location>
</feature>
<feature type="zinc finger region" description="C2H2-type 4" evidence="2">
    <location>
        <begin position="272"/>
        <end position="294"/>
    </location>
</feature>
<feature type="zinc finger region" description="C2H2-type 5" evidence="2">
    <location>
        <begin position="325"/>
        <end position="347"/>
    </location>
</feature>
<feature type="zinc finger region" description="C2H2-type 6" evidence="2">
    <location>
        <begin position="353"/>
        <end position="375"/>
    </location>
</feature>
<feature type="zinc finger region" description="C2H2-type 7" evidence="2">
    <location>
        <begin position="381"/>
        <end position="403"/>
    </location>
</feature>
<feature type="zinc finger region" description="C2H2-type 8" evidence="2">
    <location>
        <begin position="409"/>
        <end position="431"/>
    </location>
</feature>
<feature type="zinc finger region" description="C2H2-type 9" evidence="2">
    <location>
        <begin position="437"/>
        <end position="459"/>
    </location>
</feature>
<feature type="zinc finger region" description="C2H2-type 10" evidence="2">
    <location>
        <begin position="465"/>
        <end position="487"/>
    </location>
</feature>
<feature type="zinc finger region" description="C2H2-type 11" evidence="2">
    <location>
        <begin position="493"/>
        <end position="515"/>
    </location>
</feature>
<feature type="zinc finger region" description="C2H2-type 12" evidence="2">
    <location>
        <begin position="521"/>
        <end position="543"/>
    </location>
</feature>
<feature type="zinc finger region" description="C2H2-type 13" evidence="2">
    <location>
        <begin position="549"/>
        <end position="571"/>
    </location>
</feature>
<feature type="short sequence motif" description="Nuclear localization signal">
    <location>
        <begin position="170"/>
        <end position="189"/>
    </location>
</feature>
<feature type="cross-link" description="Glycyl lysine isopeptide (Lys-Gly) (interchain with G-Cter in SUMO2)" evidence="1">
    <location>
        <position position="125"/>
    </location>
</feature>
<feature type="cross-link" description="Glycyl lysine isopeptide (Lys-Gly) (interchain with G-Cter in SUMO2)" evidence="1">
    <location>
        <position position="159"/>
    </location>
</feature>
<feature type="cross-link" description="Glycyl lysine isopeptide (Lys-Gly) (interchain with G-Cter in SUMO2)" evidence="1">
    <location>
        <position position="242"/>
    </location>
</feature>
<protein>
    <recommendedName>
        <fullName>Zinc finger protein 354A</fullName>
    </recommendedName>
    <alternativeName>
        <fullName>Kidney, ischemia, and developmentally-regulated protein 1</fullName>
    </alternativeName>
    <alternativeName>
        <fullName>Renal transcription factor Kid-1</fullName>
    </alternativeName>
    <alternativeName>
        <fullName>Transcription factor 17</fullName>
        <shortName>TCF-17</shortName>
    </alternativeName>
</protein>
<evidence type="ECO:0000250" key="1">
    <source>
        <dbReference type="UniProtKB" id="O60765"/>
    </source>
</evidence>
<evidence type="ECO:0000255" key="2">
    <source>
        <dbReference type="PROSITE-ProRule" id="PRU00042"/>
    </source>
</evidence>
<evidence type="ECO:0000255" key="3">
    <source>
        <dbReference type="PROSITE-ProRule" id="PRU00119"/>
    </source>
</evidence>
<evidence type="ECO:0000269" key="4">
    <source>
    </source>
</evidence>
<evidence type="ECO:0000305" key="5"/>
<evidence type="ECO:0000305" key="6">
    <source>
    </source>
</evidence>
<gene>
    <name type="primary">Znf354a</name>
    <name type="synonym">Kid1</name>
    <name type="synonym">Tcf17</name>
    <name type="synonym">Zfp354a</name>
</gene>